<reference key="1">
    <citation type="journal article" date="2003" name="Nature">
        <title>The DNA sequence and analysis of human chromosome 6.</title>
        <authorList>
            <person name="Mungall A.J."/>
            <person name="Palmer S.A."/>
            <person name="Sims S.K."/>
            <person name="Edwards C.A."/>
            <person name="Ashurst J.L."/>
            <person name="Wilming L."/>
            <person name="Jones M.C."/>
            <person name="Horton R."/>
            <person name="Hunt S.E."/>
            <person name="Scott C.E."/>
            <person name="Gilbert J.G.R."/>
            <person name="Clamp M.E."/>
            <person name="Bethel G."/>
            <person name="Milne S."/>
            <person name="Ainscough R."/>
            <person name="Almeida J.P."/>
            <person name="Ambrose K.D."/>
            <person name="Andrews T.D."/>
            <person name="Ashwell R.I.S."/>
            <person name="Babbage A.K."/>
            <person name="Bagguley C.L."/>
            <person name="Bailey J."/>
            <person name="Banerjee R."/>
            <person name="Barker D.J."/>
            <person name="Barlow K.F."/>
            <person name="Bates K."/>
            <person name="Beare D.M."/>
            <person name="Beasley H."/>
            <person name="Beasley O."/>
            <person name="Bird C.P."/>
            <person name="Blakey S.E."/>
            <person name="Bray-Allen S."/>
            <person name="Brook J."/>
            <person name="Brown A.J."/>
            <person name="Brown J.Y."/>
            <person name="Burford D.C."/>
            <person name="Burrill W."/>
            <person name="Burton J."/>
            <person name="Carder C."/>
            <person name="Carter N.P."/>
            <person name="Chapman J.C."/>
            <person name="Clark S.Y."/>
            <person name="Clark G."/>
            <person name="Clee C.M."/>
            <person name="Clegg S."/>
            <person name="Cobley V."/>
            <person name="Collier R.E."/>
            <person name="Collins J.E."/>
            <person name="Colman L.K."/>
            <person name="Corby N.R."/>
            <person name="Coville G.J."/>
            <person name="Culley K.M."/>
            <person name="Dhami P."/>
            <person name="Davies J."/>
            <person name="Dunn M."/>
            <person name="Earthrowl M.E."/>
            <person name="Ellington A.E."/>
            <person name="Evans K.A."/>
            <person name="Faulkner L."/>
            <person name="Francis M.D."/>
            <person name="Frankish A."/>
            <person name="Frankland J."/>
            <person name="French L."/>
            <person name="Garner P."/>
            <person name="Garnett J."/>
            <person name="Ghori M.J."/>
            <person name="Gilby L.M."/>
            <person name="Gillson C.J."/>
            <person name="Glithero R.J."/>
            <person name="Grafham D.V."/>
            <person name="Grant M."/>
            <person name="Gribble S."/>
            <person name="Griffiths C."/>
            <person name="Griffiths M.N.D."/>
            <person name="Hall R."/>
            <person name="Halls K.S."/>
            <person name="Hammond S."/>
            <person name="Harley J.L."/>
            <person name="Hart E.A."/>
            <person name="Heath P.D."/>
            <person name="Heathcott R."/>
            <person name="Holmes S.J."/>
            <person name="Howden P.J."/>
            <person name="Howe K.L."/>
            <person name="Howell G.R."/>
            <person name="Huckle E."/>
            <person name="Humphray S.J."/>
            <person name="Humphries M.D."/>
            <person name="Hunt A.R."/>
            <person name="Johnson C.M."/>
            <person name="Joy A.A."/>
            <person name="Kay M."/>
            <person name="Keenan S.J."/>
            <person name="Kimberley A.M."/>
            <person name="King A."/>
            <person name="Laird G.K."/>
            <person name="Langford C."/>
            <person name="Lawlor S."/>
            <person name="Leongamornlert D.A."/>
            <person name="Leversha M."/>
            <person name="Lloyd C.R."/>
            <person name="Lloyd D.M."/>
            <person name="Loveland J.E."/>
            <person name="Lovell J."/>
            <person name="Martin S."/>
            <person name="Mashreghi-Mohammadi M."/>
            <person name="Maslen G.L."/>
            <person name="Matthews L."/>
            <person name="McCann O.T."/>
            <person name="McLaren S.J."/>
            <person name="McLay K."/>
            <person name="McMurray A."/>
            <person name="Moore M.J.F."/>
            <person name="Mullikin J.C."/>
            <person name="Niblett D."/>
            <person name="Nickerson T."/>
            <person name="Novik K.L."/>
            <person name="Oliver K."/>
            <person name="Overton-Larty E.K."/>
            <person name="Parker A."/>
            <person name="Patel R."/>
            <person name="Pearce A.V."/>
            <person name="Peck A.I."/>
            <person name="Phillimore B.J.C.T."/>
            <person name="Phillips S."/>
            <person name="Plumb R.W."/>
            <person name="Porter K.M."/>
            <person name="Ramsey Y."/>
            <person name="Ranby S.A."/>
            <person name="Rice C.M."/>
            <person name="Ross M.T."/>
            <person name="Searle S.M."/>
            <person name="Sehra H.K."/>
            <person name="Sheridan E."/>
            <person name="Skuce C.D."/>
            <person name="Smith S."/>
            <person name="Smith M."/>
            <person name="Spraggon L."/>
            <person name="Squares S.L."/>
            <person name="Steward C.A."/>
            <person name="Sycamore N."/>
            <person name="Tamlyn-Hall G."/>
            <person name="Tester J."/>
            <person name="Theaker A.J."/>
            <person name="Thomas D.W."/>
            <person name="Thorpe A."/>
            <person name="Tracey A."/>
            <person name="Tromans A."/>
            <person name="Tubby B."/>
            <person name="Wall M."/>
            <person name="Wallis J.M."/>
            <person name="West A.P."/>
            <person name="White S.S."/>
            <person name="Whitehead S.L."/>
            <person name="Whittaker H."/>
            <person name="Wild A."/>
            <person name="Willey D.J."/>
            <person name="Wilmer T.E."/>
            <person name="Wood J.M."/>
            <person name="Wray P.W."/>
            <person name="Wyatt J.C."/>
            <person name="Young L."/>
            <person name="Younger R.M."/>
            <person name="Bentley D.R."/>
            <person name="Coulson A."/>
            <person name="Durbin R.M."/>
            <person name="Hubbard T."/>
            <person name="Sulston J.E."/>
            <person name="Dunham I."/>
            <person name="Rogers J."/>
            <person name="Beck S."/>
        </authorList>
    </citation>
    <scope>NUCLEOTIDE SEQUENCE [LARGE SCALE GENOMIC DNA]</scope>
</reference>
<accession>Q4VX62</accession>
<accession>Q4VX61</accession>
<sequence>MNAAVPPEQAHSCGWGTEGCPCLRSTAIRQTFFPGGDQFQRDGGLAMLPILVSKFLASSDPPVSVPEMLGLQNRWRGMKNEEHCPGSFFLCKIRECVLNYRFQLQHPGFQHYLQSSGRRDRGRSEDKKPLEAGVWCWDRGGWDGSSRAVHLLFRGVAHPSLYLFPREDPPRLLFPRLSLLVCEQFWCYSATLLLAPLPASTC</sequence>
<feature type="chain" id="PRO_0000349278" description="Putative uncharacterized protein LINC02901">
    <location>
        <begin position="1"/>
        <end position="202"/>
    </location>
</feature>
<feature type="splice variant" id="VSP_035305" description="In isoform 2." evidence="1">
    <location>
        <begin position="1"/>
        <end position="77"/>
    </location>
</feature>
<evidence type="ECO:0000305" key="1"/>
<evidence type="ECO:0000312" key="2">
    <source>
        <dbReference type="HGNC" id="HGNC:21179"/>
    </source>
</evidence>
<proteinExistence type="uncertain"/>
<dbReference type="EMBL" id="AL627422">
    <property type="status" value="NOT_ANNOTATED_CDS"/>
    <property type="molecule type" value="Genomic_DNA"/>
</dbReference>
<dbReference type="RefSeq" id="NP_001181961.1">
    <property type="nucleotide sequence ID" value="NM_001195032.1"/>
</dbReference>
<dbReference type="RefSeq" id="NP_001289768.1">
    <property type="nucleotide sequence ID" value="NM_001302839.1"/>
</dbReference>
<dbReference type="RefSeq" id="NP_001289769.1">
    <property type="nucleotide sequence ID" value="NM_001302840.1"/>
</dbReference>
<dbReference type="RefSeq" id="NP_001289770.1">
    <property type="nucleotide sequence ID" value="NM_001302841.1"/>
</dbReference>
<dbReference type="RefSeq" id="XP_016865632.1">
    <property type="nucleotide sequence ID" value="XM_017010143.1"/>
</dbReference>
<dbReference type="RefSeq" id="XP_016865633.1">
    <property type="nucleotide sequence ID" value="XM_017010144.1"/>
</dbReference>
<dbReference type="RefSeq" id="XP_016865634.1">
    <property type="nucleotide sequence ID" value="XM_017010145.1"/>
</dbReference>
<dbReference type="RefSeq" id="XP_016865635.1">
    <property type="nucleotide sequence ID" value="XM_017010146.1"/>
</dbReference>
<dbReference type="RefSeq" id="XP_016865636.1">
    <property type="nucleotide sequence ID" value="XM_017010147.1"/>
</dbReference>
<dbReference type="BioGRID" id="935008">
    <property type="interactions" value="1"/>
</dbReference>
<dbReference type="BioMuta" id="HGNC:21179"/>
<dbReference type="DMDM" id="74753914"/>
<dbReference type="PaxDb" id="9606-ENSP00000476986"/>
<dbReference type="PeptideAtlas" id="Q4VX62"/>
<dbReference type="AGR" id="HGNC:21179"/>
<dbReference type="GeneCards" id="LINC02901"/>
<dbReference type="HGNC" id="HGNC:21179">
    <property type="gene designation" value="LINC02901"/>
</dbReference>
<dbReference type="neXtProt" id="NX_Q4VX62"/>
<dbReference type="eggNOG" id="ENOG502TE1H">
    <property type="taxonomic scope" value="Eukaryota"/>
</dbReference>
<dbReference type="InParanoid" id="Q4VX62"/>
<dbReference type="PAN-GO" id="Q4VX62">
    <property type="GO annotations" value="0 GO annotations based on evolutionary models"/>
</dbReference>
<dbReference type="PhylomeDB" id="Q4VX62"/>
<dbReference type="TreeFam" id="TF354125"/>
<dbReference type="PathwayCommons" id="Q4VX62"/>
<dbReference type="BioGRID-ORCS" id="100130967">
    <property type="hits" value="11 hits in 1112 CRISPR screens"/>
</dbReference>
<dbReference type="ChiTaRS" id="C6orf99">
    <property type="organism name" value="human"/>
</dbReference>
<dbReference type="GenomeRNAi" id="100130967"/>
<dbReference type="Pharos" id="Q4VX62">
    <property type="development level" value="Tdark"/>
</dbReference>
<dbReference type="Proteomes" id="UP000005640">
    <property type="component" value="Unplaced"/>
</dbReference>
<dbReference type="RNAct" id="Q4VX62">
    <property type="molecule type" value="protein"/>
</dbReference>
<name>CF099_HUMAN</name>
<organism>
    <name type="scientific">Homo sapiens</name>
    <name type="common">Human</name>
    <dbReference type="NCBI Taxonomy" id="9606"/>
    <lineage>
        <taxon>Eukaryota</taxon>
        <taxon>Metazoa</taxon>
        <taxon>Chordata</taxon>
        <taxon>Craniata</taxon>
        <taxon>Vertebrata</taxon>
        <taxon>Euteleostomi</taxon>
        <taxon>Mammalia</taxon>
        <taxon>Eutheria</taxon>
        <taxon>Euarchontoglires</taxon>
        <taxon>Primates</taxon>
        <taxon>Haplorrhini</taxon>
        <taxon>Catarrhini</taxon>
        <taxon>Hominidae</taxon>
        <taxon>Homo</taxon>
    </lineage>
</organism>
<protein>
    <recommendedName>
        <fullName evidence="1">Putative uncharacterized protein LINC02901</fullName>
    </recommendedName>
    <alternativeName>
        <fullName evidence="2">Long intergenic non-protein coding RNA 2901</fullName>
    </alternativeName>
</protein>
<keyword id="KW-0025">Alternative splicing</keyword>
<keyword id="KW-1185">Reference proteome</keyword>
<comment type="alternative products">
    <event type="alternative splicing"/>
    <isoform>
        <id>Q4VX62-1</id>
        <name>1</name>
        <sequence type="displayed"/>
    </isoform>
    <isoform>
        <id>Q4VX62-2</id>
        <name>2</name>
        <sequence type="described" ref="VSP_035305"/>
    </isoform>
</comment>
<comment type="caution">
    <text evidence="1">Product of a dubious gene prediction.</text>
</comment>
<gene>
    <name evidence="2" type="primary">LINC02901</name>
    <name evidence="2" type="synonym">C6orf99</name>
</gene>